<organism>
    <name type="scientific">Homo sapiens</name>
    <name type="common">Human</name>
    <dbReference type="NCBI Taxonomy" id="9606"/>
    <lineage>
        <taxon>Eukaryota</taxon>
        <taxon>Metazoa</taxon>
        <taxon>Chordata</taxon>
        <taxon>Craniata</taxon>
        <taxon>Vertebrata</taxon>
        <taxon>Euteleostomi</taxon>
        <taxon>Mammalia</taxon>
        <taxon>Eutheria</taxon>
        <taxon>Euarchontoglires</taxon>
        <taxon>Primates</taxon>
        <taxon>Haplorrhini</taxon>
        <taxon>Catarrhini</taxon>
        <taxon>Hominidae</taxon>
        <taxon>Homo</taxon>
    </lineage>
</organism>
<keyword id="KW-0025">Alternative splicing</keyword>
<keyword id="KW-1003">Cell membrane</keyword>
<keyword id="KW-0325">Glycoprotein</keyword>
<keyword id="KW-0406">Ion transport</keyword>
<keyword id="KW-0472">Membrane</keyword>
<keyword id="KW-1185">Reference proteome</keyword>
<keyword id="KW-0915">Sodium</keyword>
<keyword id="KW-0739">Sodium transport</keyword>
<keyword id="KW-0769">Symport</keyword>
<keyword id="KW-0812">Transmembrane</keyword>
<keyword id="KW-1133">Transmembrane helix</keyword>
<keyword id="KW-0813">Transport</keyword>
<gene>
    <name type="primary">SLC17A1</name>
    <name type="synonym">NPT1</name>
</gene>
<proteinExistence type="evidence at protein level"/>
<comment type="function">
    <text evidence="3 4 5">Important for the resorption of phosphate by the kidney (PubMed:7826357). May be involved in actively transporting phosphate into cells via Na(+) cotransport in the renal brush border membrane (PubMed:7826357). Plays a role in urate transport in the kidney (PubMed:25252215, PubMed:27906618).</text>
</comment>
<comment type="catalytic activity">
    <reaction evidence="5">
        <text>3 Na(+)(out) + phosphate(out) = 3 Na(+)(in) + phosphate(in)</text>
        <dbReference type="Rhea" id="RHEA:71255"/>
        <dbReference type="ChEBI" id="CHEBI:29101"/>
        <dbReference type="ChEBI" id="CHEBI:43474"/>
    </reaction>
</comment>
<comment type="catalytic activity">
    <reaction evidence="3 4">
        <text>urate(out) = urate(in)</text>
        <dbReference type="Rhea" id="RHEA:60368"/>
        <dbReference type="ChEBI" id="CHEBI:17775"/>
    </reaction>
</comment>
<comment type="biophysicochemical properties">
    <kinetics>
        <KM evidence="5">0.29 mM for phosphate</KM>
    </kinetics>
</comment>
<comment type="subunit">
    <text evidence="1">Interacts with PDZK1.</text>
</comment>
<comment type="subcellular location">
    <subcellularLocation>
        <location evidence="3 4">Apical cell membrane</location>
        <topology evidence="2">Multi-pass membrane protein</topology>
    </subcellularLocation>
</comment>
<comment type="alternative products">
    <event type="alternative splicing"/>
    <isoform>
        <id>Q14916-1</id>
        <name>1</name>
        <sequence type="displayed"/>
    </isoform>
    <isoform>
        <id>Q14916-2</id>
        <name>2</name>
        <sequence type="described" ref="VSP_035012"/>
    </isoform>
</comment>
<comment type="tissue specificity">
    <text evidence="5">Expressed in kidney cortex, liver and brain but not in other tissues.</text>
</comment>
<comment type="similarity">
    <text evidence="8">Belongs to the major facilitator superfamily. Sodium/anion cotransporter family.</text>
</comment>
<comment type="caution">
    <text evidence="8">It is uncertain whether Met-1 or Met-3 is the initiator.</text>
</comment>
<comment type="sequence caution" evidence="8">
    <conflict type="erroneous initiation">
        <sequence resource="EMBL-CDS" id="BAA05888"/>
    </conflict>
    <text>Truncated N-terminus.</text>
</comment>
<dbReference type="EMBL" id="X71355">
    <property type="protein sequence ID" value="CAA50490.1"/>
    <property type="molecule type" value="mRNA"/>
</dbReference>
<dbReference type="EMBL" id="AY780791">
    <property type="protein sequence ID" value="AAV98361.1"/>
    <property type="molecule type" value="mRNA"/>
</dbReference>
<dbReference type="EMBL" id="AK290783">
    <property type="protein sequence ID" value="BAF83472.1"/>
    <property type="molecule type" value="mRNA"/>
</dbReference>
<dbReference type="EMBL" id="AL138726">
    <property type="status" value="NOT_ANNOTATED_CDS"/>
    <property type="molecule type" value="Genomic_DNA"/>
</dbReference>
<dbReference type="EMBL" id="CH471087">
    <property type="protein sequence ID" value="EAW55494.1"/>
    <property type="molecule type" value="Genomic_DNA"/>
</dbReference>
<dbReference type="EMBL" id="BC101745">
    <property type="protein sequence ID" value="AAI01746.1"/>
    <property type="molecule type" value="mRNA"/>
</dbReference>
<dbReference type="EMBL" id="BC101747">
    <property type="protein sequence ID" value="AAI01748.1"/>
    <property type="molecule type" value="mRNA"/>
</dbReference>
<dbReference type="EMBL" id="AF362494">
    <property type="protein sequence ID" value="AAL04478.1"/>
    <property type="molecule type" value="Genomic_DNA"/>
</dbReference>
<dbReference type="EMBL" id="AF362490">
    <property type="protein sequence ID" value="AAL04478.1"/>
    <property type="status" value="JOINED"/>
    <property type="molecule type" value="Genomic_DNA"/>
</dbReference>
<dbReference type="EMBL" id="AF362492">
    <property type="protein sequence ID" value="AAL04478.1"/>
    <property type="status" value="JOINED"/>
    <property type="molecule type" value="Genomic_DNA"/>
</dbReference>
<dbReference type="EMBL" id="D83236">
    <property type="protein sequence ID" value="BAA25645.1"/>
    <property type="molecule type" value="Genomic_DNA"/>
</dbReference>
<dbReference type="EMBL" id="D28532">
    <property type="protein sequence ID" value="BAA05888.1"/>
    <property type="status" value="ALT_INIT"/>
    <property type="molecule type" value="mRNA"/>
</dbReference>
<dbReference type="CCDS" id="CCDS4565.1">
    <molecule id="Q14916-1"/>
</dbReference>
<dbReference type="PIR" id="A48916">
    <property type="entry name" value="A48916"/>
</dbReference>
<dbReference type="PIR" id="I39473">
    <property type="entry name" value="I39473"/>
</dbReference>
<dbReference type="RefSeq" id="NP_005065.2">
    <molecule id="Q14916-1"/>
    <property type="nucleotide sequence ID" value="NM_005074.5"/>
</dbReference>
<dbReference type="RefSeq" id="XP_011513122.3">
    <molecule id="Q14916-2"/>
    <property type="nucleotide sequence ID" value="XM_011514820.3"/>
</dbReference>
<dbReference type="RefSeq" id="XP_016866688.2">
    <molecule id="Q14916-1"/>
    <property type="nucleotide sequence ID" value="XM_017011199.2"/>
</dbReference>
<dbReference type="RefSeq" id="XP_016866690.2">
    <molecule id="Q14916-1"/>
    <property type="nucleotide sequence ID" value="XM_017011201.3"/>
</dbReference>
<dbReference type="RefSeq" id="XP_054212223.1">
    <molecule id="Q14916-2"/>
    <property type="nucleotide sequence ID" value="XM_054356248.1"/>
</dbReference>
<dbReference type="SMR" id="Q14916"/>
<dbReference type="BioGRID" id="112456">
    <property type="interactions" value="2"/>
</dbReference>
<dbReference type="FunCoup" id="Q14916">
    <property type="interactions" value="52"/>
</dbReference>
<dbReference type="STRING" id="9606.ENSP00000244527"/>
<dbReference type="ChEMBL" id="CHEMBL3769298"/>
<dbReference type="TCDB" id="2.A.1.14.27">
    <property type="family name" value="the major facilitator superfamily (mfs)"/>
</dbReference>
<dbReference type="GlyCosmos" id="Q14916">
    <property type="glycosylation" value="3 sites, No reported glycans"/>
</dbReference>
<dbReference type="GlyGen" id="Q14916">
    <property type="glycosylation" value="3 sites"/>
</dbReference>
<dbReference type="iPTMnet" id="Q14916"/>
<dbReference type="PhosphoSitePlus" id="Q14916"/>
<dbReference type="BioMuta" id="SLC17A1"/>
<dbReference type="DMDM" id="205371809"/>
<dbReference type="MassIVE" id="Q14916"/>
<dbReference type="PaxDb" id="9606-ENSP00000244527"/>
<dbReference type="PeptideAtlas" id="Q14916"/>
<dbReference type="Antibodypedia" id="25435">
    <property type="antibodies" value="70 antibodies from 21 providers"/>
</dbReference>
<dbReference type="DNASU" id="6568"/>
<dbReference type="Ensembl" id="ENST00000244527.10">
    <molecule id="Q14916-1"/>
    <property type="protein sequence ID" value="ENSP00000244527.4"/>
    <property type="gene ID" value="ENSG00000124568.12"/>
</dbReference>
<dbReference type="Ensembl" id="ENST00000468082.1">
    <molecule id="Q14916-2"/>
    <property type="protein sequence ID" value="ENSP00000420546.1"/>
    <property type="gene ID" value="ENSG00000124568.12"/>
</dbReference>
<dbReference type="Ensembl" id="ENST00000476801.5">
    <molecule id="Q14916-1"/>
    <property type="protein sequence ID" value="ENSP00000420614.1"/>
    <property type="gene ID" value="ENSG00000124568.12"/>
</dbReference>
<dbReference type="GeneID" id="6568"/>
<dbReference type="KEGG" id="hsa:6568"/>
<dbReference type="MANE-Select" id="ENST00000244527.10">
    <property type="protein sequence ID" value="ENSP00000244527.4"/>
    <property type="RefSeq nucleotide sequence ID" value="NM_005074.5"/>
    <property type="RefSeq protein sequence ID" value="NP_005065.2"/>
</dbReference>
<dbReference type="UCSC" id="uc003nfh.5">
    <molecule id="Q14916-1"/>
    <property type="organism name" value="human"/>
</dbReference>
<dbReference type="AGR" id="HGNC:10929"/>
<dbReference type="CTD" id="6568"/>
<dbReference type="DisGeNET" id="6568"/>
<dbReference type="GeneCards" id="SLC17A1"/>
<dbReference type="HGNC" id="HGNC:10929">
    <property type="gene designation" value="SLC17A1"/>
</dbReference>
<dbReference type="HPA" id="ENSG00000124568">
    <property type="expression patterns" value="Group enriched (kidney, liver)"/>
</dbReference>
<dbReference type="MIM" id="182308">
    <property type="type" value="gene"/>
</dbReference>
<dbReference type="neXtProt" id="NX_Q14916"/>
<dbReference type="OpenTargets" id="ENSG00000124568"/>
<dbReference type="PharmGKB" id="PA35820"/>
<dbReference type="VEuPathDB" id="HostDB:ENSG00000124568"/>
<dbReference type="eggNOG" id="KOG2532">
    <property type="taxonomic scope" value="Eukaryota"/>
</dbReference>
<dbReference type="GeneTree" id="ENSGT00940000162346"/>
<dbReference type="HOGENOM" id="CLU_001265_5_0_1"/>
<dbReference type="InParanoid" id="Q14916"/>
<dbReference type="OMA" id="TAQHEIW"/>
<dbReference type="OrthoDB" id="2985014at2759"/>
<dbReference type="PAN-GO" id="Q14916">
    <property type="GO annotations" value="4 GO annotations based on evolutionary models"/>
</dbReference>
<dbReference type="PhylomeDB" id="Q14916"/>
<dbReference type="TreeFam" id="TF313535"/>
<dbReference type="PathwayCommons" id="Q14916"/>
<dbReference type="Reactome" id="R-HSA-428643">
    <property type="pathway name" value="Organic anion transporters"/>
</dbReference>
<dbReference type="SignaLink" id="Q14916"/>
<dbReference type="BioGRID-ORCS" id="6568">
    <property type="hits" value="7 hits in 1135 CRISPR screens"/>
</dbReference>
<dbReference type="ChiTaRS" id="SLC17A1">
    <property type="organism name" value="human"/>
</dbReference>
<dbReference type="GeneWiki" id="SLC17A1"/>
<dbReference type="GenomeRNAi" id="6568"/>
<dbReference type="Pharos" id="Q14916">
    <property type="development level" value="Tbio"/>
</dbReference>
<dbReference type="PRO" id="PR:Q14916"/>
<dbReference type="Proteomes" id="UP000005640">
    <property type="component" value="Chromosome 6"/>
</dbReference>
<dbReference type="RNAct" id="Q14916">
    <property type="molecule type" value="protein"/>
</dbReference>
<dbReference type="Bgee" id="ENSG00000124568">
    <property type="expression patterns" value="Expressed in adult mammalian kidney and 43 other cell types or tissues"/>
</dbReference>
<dbReference type="ExpressionAtlas" id="Q14916">
    <property type="expression patterns" value="baseline and differential"/>
</dbReference>
<dbReference type="GO" id="GO:0016324">
    <property type="term" value="C:apical plasma membrane"/>
    <property type="evidence" value="ECO:0000314"/>
    <property type="project" value="UniProtKB"/>
</dbReference>
<dbReference type="GO" id="GO:0016020">
    <property type="term" value="C:membrane"/>
    <property type="evidence" value="ECO:0000304"/>
    <property type="project" value="ProtInc"/>
</dbReference>
<dbReference type="GO" id="GO:0005886">
    <property type="term" value="C:plasma membrane"/>
    <property type="evidence" value="ECO:0000304"/>
    <property type="project" value="Reactome"/>
</dbReference>
<dbReference type="GO" id="GO:0005436">
    <property type="term" value="F:sodium:phosphate symporter activity"/>
    <property type="evidence" value="ECO:0000304"/>
    <property type="project" value="Reactome"/>
</dbReference>
<dbReference type="GO" id="GO:0022857">
    <property type="term" value="F:transmembrane transporter activity"/>
    <property type="evidence" value="ECO:0000318"/>
    <property type="project" value="GO_Central"/>
</dbReference>
<dbReference type="GO" id="GO:0006811">
    <property type="term" value="P:monoatomic ion transport"/>
    <property type="evidence" value="ECO:0000304"/>
    <property type="project" value="Reactome"/>
</dbReference>
<dbReference type="GO" id="GO:0035435">
    <property type="term" value="P:phosphate ion transmembrane transport"/>
    <property type="evidence" value="ECO:0007669"/>
    <property type="project" value="InterPro"/>
</dbReference>
<dbReference type="GO" id="GO:0006817">
    <property type="term" value="P:phosphate ion transport"/>
    <property type="evidence" value="ECO:0000304"/>
    <property type="project" value="ProtInc"/>
</dbReference>
<dbReference type="GO" id="GO:0044341">
    <property type="term" value="P:sodium-dependent phosphate transport"/>
    <property type="evidence" value="ECO:0000314"/>
    <property type="project" value="UniProtKB"/>
</dbReference>
<dbReference type="GO" id="GO:0046415">
    <property type="term" value="P:urate metabolic process"/>
    <property type="evidence" value="ECO:0000315"/>
    <property type="project" value="BHF-UCL"/>
</dbReference>
<dbReference type="GO" id="GO:0015747">
    <property type="term" value="P:urate transport"/>
    <property type="evidence" value="ECO:0000315"/>
    <property type="project" value="UniProtKB"/>
</dbReference>
<dbReference type="CDD" id="cd17318">
    <property type="entry name" value="MFS_SLC17"/>
    <property type="match status" value="1"/>
</dbReference>
<dbReference type="FunFam" id="1.20.1250.20:FF:000003">
    <property type="entry name" value="Solute carrier family 17 member 3"/>
    <property type="match status" value="1"/>
</dbReference>
<dbReference type="FunFam" id="1.20.1250.20:FF:000060">
    <property type="entry name" value="Solute carrier family 17 member 3"/>
    <property type="match status" value="1"/>
</dbReference>
<dbReference type="Gene3D" id="1.20.1250.20">
    <property type="entry name" value="MFS general substrate transporter like domains"/>
    <property type="match status" value="2"/>
</dbReference>
<dbReference type="InterPro" id="IPR011701">
    <property type="entry name" value="MFS"/>
</dbReference>
<dbReference type="InterPro" id="IPR020846">
    <property type="entry name" value="MFS_dom"/>
</dbReference>
<dbReference type="InterPro" id="IPR050382">
    <property type="entry name" value="MFS_Na/Anion_cotransporter"/>
</dbReference>
<dbReference type="InterPro" id="IPR036259">
    <property type="entry name" value="MFS_trans_sf"/>
</dbReference>
<dbReference type="InterPro" id="IPR004745">
    <property type="entry name" value="Pi_cotranspt"/>
</dbReference>
<dbReference type="NCBIfam" id="TIGR00894">
    <property type="entry name" value="2A0114euk"/>
    <property type="match status" value="1"/>
</dbReference>
<dbReference type="PANTHER" id="PTHR11662:SF26">
    <property type="entry name" value="SODIUM-DEPENDENT PHOSPHATE TRANSPORT PROTEIN 1"/>
    <property type="match status" value="1"/>
</dbReference>
<dbReference type="PANTHER" id="PTHR11662">
    <property type="entry name" value="SOLUTE CARRIER FAMILY 17"/>
    <property type="match status" value="1"/>
</dbReference>
<dbReference type="Pfam" id="PF07690">
    <property type="entry name" value="MFS_1"/>
    <property type="match status" value="1"/>
</dbReference>
<dbReference type="SUPFAM" id="SSF103473">
    <property type="entry name" value="MFS general substrate transporter"/>
    <property type="match status" value="1"/>
</dbReference>
<dbReference type="PROSITE" id="PS50850">
    <property type="entry name" value="MFS"/>
    <property type="match status" value="1"/>
</dbReference>
<name>NPT1_HUMAN</name>
<evidence type="ECO:0000250" key="1">
    <source>
        <dbReference type="UniProtKB" id="Q61983"/>
    </source>
</evidence>
<evidence type="ECO:0000255" key="2"/>
<evidence type="ECO:0000269" key="3">
    <source>
    </source>
</evidence>
<evidence type="ECO:0000269" key="4">
    <source>
    </source>
</evidence>
<evidence type="ECO:0000269" key="5">
    <source>
    </source>
</evidence>
<evidence type="ECO:0000269" key="6">
    <source>
    </source>
</evidence>
<evidence type="ECO:0000303" key="7">
    <source ref="2"/>
</evidence>
<evidence type="ECO:0000305" key="8"/>
<feature type="chain" id="PRO_0000220936" description="Sodium-dependent phosphate transport protein 1">
    <location>
        <begin position="1"/>
        <end position="467"/>
    </location>
</feature>
<feature type="transmembrane region" description="Helical" evidence="2">
    <location>
        <begin position="81"/>
        <end position="101"/>
    </location>
</feature>
<feature type="transmembrane region" description="Helical" evidence="2">
    <location>
        <begin position="119"/>
        <end position="139"/>
    </location>
</feature>
<feature type="transmembrane region" description="Helical" evidence="2">
    <location>
        <begin position="178"/>
        <end position="198"/>
    </location>
</feature>
<feature type="transmembrane region" description="Helical" evidence="2">
    <location>
        <begin position="200"/>
        <end position="220"/>
    </location>
</feature>
<feature type="transmembrane region" description="Helical" evidence="2">
    <location>
        <begin position="257"/>
        <end position="277"/>
    </location>
</feature>
<feature type="transmembrane region" description="Helical" evidence="2">
    <location>
        <begin position="301"/>
        <end position="321"/>
    </location>
</feature>
<feature type="transmembrane region" description="Helical" evidence="2">
    <location>
        <begin position="339"/>
        <end position="359"/>
    </location>
</feature>
<feature type="transmembrane region" description="Helical" evidence="2">
    <location>
        <begin position="365"/>
        <end position="385"/>
    </location>
</feature>
<feature type="transmembrane region" description="Helical" evidence="2">
    <location>
        <begin position="401"/>
        <end position="421"/>
    </location>
</feature>
<feature type="transmembrane region" description="Helical" evidence="2">
    <location>
        <begin position="433"/>
        <end position="453"/>
    </location>
</feature>
<feature type="glycosylation site" description="N-linked (GlcNAc...) asparagine" evidence="2">
    <location>
        <position position="41"/>
    </location>
</feature>
<feature type="glycosylation site" description="N-linked (GlcNAc...) asparagine" evidence="2">
    <location>
        <position position="49"/>
    </location>
</feature>
<feature type="glycosylation site" description="N-linked (GlcNAc...) asparagine" evidence="2">
    <location>
        <position position="58"/>
    </location>
</feature>
<feature type="splice variant" id="VSP_035012" description="In isoform 2." evidence="7">
    <location>
        <begin position="246"/>
        <end position="299"/>
    </location>
</feature>
<feature type="sequence variant" id="VAR_050060" description="In dbSNP:rs6933573.">
    <original>S</original>
    <variation>N</variation>
    <location>
        <position position="76"/>
    </location>
</feature>
<feature type="sequence variant" id="VAR_050061" description="Increased urate transport; dbSNP:rs1165196." evidence="3 4 5 6">
    <original>T</original>
    <variation>I</variation>
    <location>
        <position position="269"/>
    </location>
</feature>
<feature type="sequence conflict" description="In Ref. 9; BAA05888." evidence="8" ref="9">
    <original>RA</original>
    <variation>LM</variation>
    <location>
        <begin position="37"/>
        <end position="38"/>
    </location>
</feature>
<feature type="sequence conflict" description="In Ref. 9; BAA05888." evidence="8" ref="9">
    <original>I</original>
    <variation>V</variation>
    <location>
        <position position="79"/>
    </location>
</feature>
<feature type="sequence conflict" description="In Ref. 2; AAV98361." evidence="8" ref="2">
    <original>Y</original>
    <variation>H</variation>
    <location>
        <position position="100"/>
    </location>
</feature>
<feature type="sequence conflict" description="In Ref. 3; BAF83472." evidence="8" ref="3">
    <original>L</original>
    <variation>P</variation>
    <location>
        <position position="117"/>
    </location>
</feature>
<feature type="sequence conflict" description="In Ref. 9; BAA05888." evidence="8" ref="9">
    <original>G</original>
    <variation>C</variation>
    <location>
        <position position="209"/>
    </location>
</feature>
<feature type="sequence conflict" description="In Ref. 2; AAV98361." evidence="8" ref="2">
    <original>L</original>
    <variation>F</variation>
    <location>
        <position position="215"/>
    </location>
</feature>
<feature type="sequence conflict" description="In Ref. 9; BAA05888." evidence="8" ref="9">
    <original>S</original>
    <variation>G</variation>
    <location>
        <position position="233"/>
    </location>
</feature>
<accession>Q14916</accession>
<accession>A8K418</accession>
<accession>O60761</accession>
<accession>Q13783</accession>
<accession>Q3MIP5</accession>
<accession>Q5MJP8</accession>
<accession>Q5TB83</accession>
<accession>Q96KL8</accession>
<reference key="1">
    <citation type="journal article" date="1993" name="Genomics">
        <title>Molecular cloning of the cDNA encoding a human renal sodium phosphate transport protein and its assignment to chromosome 6p21.3-p23.</title>
        <authorList>
            <person name="Chong S.S."/>
            <person name="Kristjansson K."/>
            <person name="Zoghbi H.Y."/>
            <person name="Hughes M.R."/>
        </authorList>
    </citation>
    <scope>NUCLEOTIDE SEQUENCE [MRNA] (ISOFORM 1)</scope>
    <scope>VARIANT ILE-269</scope>
    <source>
        <tissue>Kidney</tissue>
    </source>
</reference>
<reference key="2">
    <citation type="submission" date="2004-10" db="EMBL/GenBank/DDBJ databases">
        <authorList>
            <person name="Zhou G."/>
            <person name="Nong W."/>
            <person name="Li H."/>
            <person name="Ke R."/>
            <person name="Zhong G."/>
            <person name="Shen C."/>
            <person name="Lin L."/>
            <person name="Yang S."/>
        </authorList>
    </citation>
    <scope>NUCLEOTIDE SEQUENCE [MRNA] (ISOFORM 2)</scope>
</reference>
<reference key="3">
    <citation type="journal article" date="2004" name="Nat. Genet.">
        <title>Complete sequencing and characterization of 21,243 full-length human cDNAs.</title>
        <authorList>
            <person name="Ota T."/>
            <person name="Suzuki Y."/>
            <person name="Nishikawa T."/>
            <person name="Otsuki T."/>
            <person name="Sugiyama T."/>
            <person name="Irie R."/>
            <person name="Wakamatsu A."/>
            <person name="Hayashi K."/>
            <person name="Sato H."/>
            <person name="Nagai K."/>
            <person name="Kimura K."/>
            <person name="Makita H."/>
            <person name="Sekine M."/>
            <person name="Obayashi M."/>
            <person name="Nishi T."/>
            <person name="Shibahara T."/>
            <person name="Tanaka T."/>
            <person name="Ishii S."/>
            <person name="Yamamoto J."/>
            <person name="Saito K."/>
            <person name="Kawai Y."/>
            <person name="Isono Y."/>
            <person name="Nakamura Y."/>
            <person name="Nagahari K."/>
            <person name="Murakami K."/>
            <person name="Yasuda T."/>
            <person name="Iwayanagi T."/>
            <person name="Wagatsuma M."/>
            <person name="Shiratori A."/>
            <person name="Sudo H."/>
            <person name="Hosoiri T."/>
            <person name="Kaku Y."/>
            <person name="Kodaira H."/>
            <person name="Kondo H."/>
            <person name="Sugawara M."/>
            <person name="Takahashi M."/>
            <person name="Kanda K."/>
            <person name="Yokoi T."/>
            <person name="Furuya T."/>
            <person name="Kikkawa E."/>
            <person name="Omura Y."/>
            <person name="Abe K."/>
            <person name="Kamihara K."/>
            <person name="Katsuta N."/>
            <person name="Sato K."/>
            <person name="Tanikawa M."/>
            <person name="Yamazaki M."/>
            <person name="Ninomiya K."/>
            <person name="Ishibashi T."/>
            <person name="Yamashita H."/>
            <person name="Murakawa K."/>
            <person name="Fujimori K."/>
            <person name="Tanai H."/>
            <person name="Kimata M."/>
            <person name="Watanabe M."/>
            <person name="Hiraoka S."/>
            <person name="Chiba Y."/>
            <person name="Ishida S."/>
            <person name="Ono Y."/>
            <person name="Takiguchi S."/>
            <person name="Watanabe S."/>
            <person name="Yosida M."/>
            <person name="Hotuta T."/>
            <person name="Kusano J."/>
            <person name="Kanehori K."/>
            <person name="Takahashi-Fujii A."/>
            <person name="Hara H."/>
            <person name="Tanase T.-O."/>
            <person name="Nomura Y."/>
            <person name="Togiya S."/>
            <person name="Komai F."/>
            <person name="Hara R."/>
            <person name="Takeuchi K."/>
            <person name="Arita M."/>
            <person name="Imose N."/>
            <person name="Musashino K."/>
            <person name="Yuuki H."/>
            <person name="Oshima A."/>
            <person name="Sasaki N."/>
            <person name="Aotsuka S."/>
            <person name="Yoshikawa Y."/>
            <person name="Matsunawa H."/>
            <person name="Ichihara T."/>
            <person name="Shiohata N."/>
            <person name="Sano S."/>
            <person name="Moriya S."/>
            <person name="Momiyama H."/>
            <person name="Satoh N."/>
            <person name="Takami S."/>
            <person name="Terashima Y."/>
            <person name="Suzuki O."/>
            <person name="Nakagawa S."/>
            <person name="Senoh A."/>
            <person name="Mizoguchi H."/>
            <person name="Goto Y."/>
            <person name="Shimizu F."/>
            <person name="Wakebe H."/>
            <person name="Hishigaki H."/>
            <person name="Watanabe T."/>
            <person name="Sugiyama A."/>
            <person name="Takemoto M."/>
            <person name="Kawakami B."/>
            <person name="Yamazaki M."/>
            <person name="Watanabe K."/>
            <person name="Kumagai A."/>
            <person name="Itakura S."/>
            <person name="Fukuzumi Y."/>
            <person name="Fujimori Y."/>
            <person name="Komiyama M."/>
            <person name="Tashiro H."/>
            <person name="Tanigami A."/>
            <person name="Fujiwara T."/>
            <person name="Ono T."/>
            <person name="Yamada K."/>
            <person name="Fujii Y."/>
            <person name="Ozaki K."/>
            <person name="Hirao M."/>
            <person name="Ohmori Y."/>
            <person name="Kawabata A."/>
            <person name="Hikiji T."/>
            <person name="Kobatake N."/>
            <person name="Inagaki H."/>
            <person name="Ikema Y."/>
            <person name="Okamoto S."/>
            <person name="Okitani R."/>
            <person name="Kawakami T."/>
            <person name="Noguchi S."/>
            <person name="Itoh T."/>
            <person name="Shigeta K."/>
            <person name="Senba T."/>
            <person name="Matsumura K."/>
            <person name="Nakajima Y."/>
            <person name="Mizuno T."/>
            <person name="Morinaga M."/>
            <person name="Sasaki M."/>
            <person name="Togashi T."/>
            <person name="Oyama M."/>
            <person name="Hata H."/>
            <person name="Watanabe M."/>
            <person name="Komatsu T."/>
            <person name="Mizushima-Sugano J."/>
            <person name="Satoh T."/>
            <person name="Shirai Y."/>
            <person name="Takahashi Y."/>
            <person name="Nakagawa K."/>
            <person name="Okumura K."/>
            <person name="Nagase T."/>
            <person name="Nomura N."/>
            <person name="Kikuchi H."/>
            <person name="Masuho Y."/>
            <person name="Yamashita R."/>
            <person name="Nakai K."/>
            <person name="Yada T."/>
            <person name="Nakamura Y."/>
            <person name="Ohara O."/>
            <person name="Isogai T."/>
            <person name="Sugano S."/>
        </authorList>
    </citation>
    <scope>NUCLEOTIDE SEQUENCE [LARGE SCALE MRNA] (ISOFORM 1)</scope>
    <source>
        <tissue>Kidney</tissue>
    </source>
</reference>
<reference key="4">
    <citation type="journal article" date="2003" name="Nature">
        <title>The DNA sequence and analysis of human chromosome 6.</title>
        <authorList>
            <person name="Mungall A.J."/>
            <person name="Palmer S.A."/>
            <person name="Sims S.K."/>
            <person name="Edwards C.A."/>
            <person name="Ashurst J.L."/>
            <person name="Wilming L."/>
            <person name="Jones M.C."/>
            <person name="Horton R."/>
            <person name="Hunt S.E."/>
            <person name="Scott C.E."/>
            <person name="Gilbert J.G.R."/>
            <person name="Clamp M.E."/>
            <person name="Bethel G."/>
            <person name="Milne S."/>
            <person name="Ainscough R."/>
            <person name="Almeida J.P."/>
            <person name="Ambrose K.D."/>
            <person name="Andrews T.D."/>
            <person name="Ashwell R.I.S."/>
            <person name="Babbage A.K."/>
            <person name="Bagguley C.L."/>
            <person name="Bailey J."/>
            <person name="Banerjee R."/>
            <person name="Barker D.J."/>
            <person name="Barlow K.F."/>
            <person name="Bates K."/>
            <person name="Beare D.M."/>
            <person name="Beasley H."/>
            <person name="Beasley O."/>
            <person name="Bird C.P."/>
            <person name="Blakey S.E."/>
            <person name="Bray-Allen S."/>
            <person name="Brook J."/>
            <person name="Brown A.J."/>
            <person name="Brown J.Y."/>
            <person name="Burford D.C."/>
            <person name="Burrill W."/>
            <person name="Burton J."/>
            <person name="Carder C."/>
            <person name="Carter N.P."/>
            <person name="Chapman J.C."/>
            <person name="Clark S.Y."/>
            <person name="Clark G."/>
            <person name="Clee C.M."/>
            <person name="Clegg S."/>
            <person name="Cobley V."/>
            <person name="Collier R.E."/>
            <person name="Collins J.E."/>
            <person name="Colman L.K."/>
            <person name="Corby N.R."/>
            <person name="Coville G.J."/>
            <person name="Culley K.M."/>
            <person name="Dhami P."/>
            <person name="Davies J."/>
            <person name="Dunn M."/>
            <person name="Earthrowl M.E."/>
            <person name="Ellington A.E."/>
            <person name="Evans K.A."/>
            <person name="Faulkner L."/>
            <person name="Francis M.D."/>
            <person name="Frankish A."/>
            <person name="Frankland J."/>
            <person name="French L."/>
            <person name="Garner P."/>
            <person name="Garnett J."/>
            <person name="Ghori M.J."/>
            <person name="Gilby L.M."/>
            <person name="Gillson C.J."/>
            <person name="Glithero R.J."/>
            <person name="Grafham D.V."/>
            <person name="Grant M."/>
            <person name="Gribble S."/>
            <person name="Griffiths C."/>
            <person name="Griffiths M.N.D."/>
            <person name="Hall R."/>
            <person name="Halls K.S."/>
            <person name="Hammond S."/>
            <person name="Harley J.L."/>
            <person name="Hart E.A."/>
            <person name="Heath P.D."/>
            <person name="Heathcott R."/>
            <person name="Holmes S.J."/>
            <person name="Howden P.J."/>
            <person name="Howe K.L."/>
            <person name="Howell G.R."/>
            <person name="Huckle E."/>
            <person name="Humphray S.J."/>
            <person name="Humphries M.D."/>
            <person name="Hunt A.R."/>
            <person name="Johnson C.M."/>
            <person name="Joy A.A."/>
            <person name="Kay M."/>
            <person name="Keenan S.J."/>
            <person name="Kimberley A.M."/>
            <person name="King A."/>
            <person name="Laird G.K."/>
            <person name="Langford C."/>
            <person name="Lawlor S."/>
            <person name="Leongamornlert D.A."/>
            <person name="Leversha M."/>
            <person name="Lloyd C.R."/>
            <person name="Lloyd D.M."/>
            <person name="Loveland J.E."/>
            <person name="Lovell J."/>
            <person name="Martin S."/>
            <person name="Mashreghi-Mohammadi M."/>
            <person name="Maslen G.L."/>
            <person name="Matthews L."/>
            <person name="McCann O.T."/>
            <person name="McLaren S.J."/>
            <person name="McLay K."/>
            <person name="McMurray A."/>
            <person name="Moore M.J.F."/>
            <person name="Mullikin J.C."/>
            <person name="Niblett D."/>
            <person name="Nickerson T."/>
            <person name="Novik K.L."/>
            <person name="Oliver K."/>
            <person name="Overton-Larty E.K."/>
            <person name="Parker A."/>
            <person name="Patel R."/>
            <person name="Pearce A.V."/>
            <person name="Peck A.I."/>
            <person name="Phillimore B.J.C.T."/>
            <person name="Phillips S."/>
            <person name="Plumb R.W."/>
            <person name="Porter K.M."/>
            <person name="Ramsey Y."/>
            <person name="Ranby S.A."/>
            <person name="Rice C.M."/>
            <person name="Ross M.T."/>
            <person name="Searle S.M."/>
            <person name="Sehra H.K."/>
            <person name="Sheridan E."/>
            <person name="Skuce C.D."/>
            <person name="Smith S."/>
            <person name="Smith M."/>
            <person name="Spraggon L."/>
            <person name="Squares S.L."/>
            <person name="Steward C.A."/>
            <person name="Sycamore N."/>
            <person name="Tamlyn-Hall G."/>
            <person name="Tester J."/>
            <person name="Theaker A.J."/>
            <person name="Thomas D.W."/>
            <person name="Thorpe A."/>
            <person name="Tracey A."/>
            <person name="Tromans A."/>
            <person name="Tubby B."/>
            <person name="Wall M."/>
            <person name="Wallis J.M."/>
            <person name="West A.P."/>
            <person name="White S.S."/>
            <person name="Whitehead S.L."/>
            <person name="Whittaker H."/>
            <person name="Wild A."/>
            <person name="Willey D.J."/>
            <person name="Wilmer T.E."/>
            <person name="Wood J.M."/>
            <person name="Wray P.W."/>
            <person name="Wyatt J.C."/>
            <person name="Young L."/>
            <person name="Younger R.M."/>
            <person name="Bentley D.R."/>
            <person name="Coulson A."/>
            <person name="Durbin R.M."/>
            <person name="Hubbard T."/>
            <person name="Sulston J.E."/>
            <person name="Dunham I."/>
            <person name="Rogers J."/>
            <person name="Beck S."/>
        </authorList>
    </citation>
    <scope>NUCLEOTIDE SEQUENCE [LARGE SCALE GENOMIC DNA]</scope>
</reference>
<reference key="5">
    <citation type="submission" date="2005-07" db="EMBL/GenBank/DDBJ databases">
        <authorList>
            <person name="Mural R.J."/>
            <person name="Istrail S."/>
            <person name="Sutton G.G."/>
            <person name="Florea L."/>
            <person name="Halpern A.L."/>
            <person name="Mobarry C.M."/>
            <person name="Lippert R."/>
            <person name="Walenz B."/>
            <person name="Shatkay H."/>
            <person name="Dew I."/>
            <person name="Miller J.R."/>
            <person name="Flanigan M.J."/>
            <person name="Edwards N.J."/>
            <person name="Bolanos R."/>
            <person name="Fasulo D."/>
            <person name="Halldorsson B.V."/>
            <person name="Hannenhalli S."/>
            <person name="Turner R."/>
            <person name="Yooseph S."/>
            <person name="Lu F."/>
            <person name="Nusskern D.R."/>
            <person name="Shue B.C."/>
            <person name="Zheng X.H."/>
            <person name="Zhong F."/>
            <person name="Delcher A.L."/>
            <person name="Huson D.H."/>
            <person name="Kravitz S.A."/>
            <person name="Mouchard L."/>
            <person name="Reinert K."/>
            <person name="Remington K.A."/>
            <person name="Clark A.G."/>
            <person name="Waterman M.S."/>
            <person name="Eichler E.E."/>
            <person name="Adams M.D."/>
            <person name="Hunkapiller M.W."/>
            <person name="Myers E.W."/>
            <person name="Venter J.C."/>
        </authorList>
    </citation>
    <scope>NUCLEOTIDE SEQUENCE [LARGE SCALE GENOMIC DNA]</scope>
</reference>
<reference key="6">
    <citation type="journal article" date="2004" name="Genome Res.">
        <title>The status, quality, and expansion of the NIH full-length cDNA project: the Mammalian Gene Collection (MGC).</title>
        <authorList>
            <consortium name="The MGC Project Team"/>
        </authorList>
    </citation>
    <scope>NUCLEOTIDE SEQUENCE [LARGE SCALE MRNA] (ISOFORM 1)</scope>
    <source>
        <tissue>Liver</tissue>
    </source>
</reference>
<reference key="7">
    <citation type="journal article" date="2001" name="Am. J. Physiol.">
        <title>Murine and human type I Na-phosphate cotransporter genes: structure and promoter activity.</title>
        <authorList>
            <person name="Soumounou Y."/>
            <person name="Gauthier C."/>
            <person name="Tenenhouse H.S."/>
        </authorList>
    </citation>
    <scope>NUCLEOTIDE SEQUENCE [GENOMIC DNA] OF 1-113</scope>
</reference>
<reference key="8">
    <citation type="journal article" date="1998" name="Biochim. Biophys. Acta">
        <title>Characterization of the 5' flanking region of the human NPT-1 Na+/phosphate cotransporter gene.</title>
        <authorList>
            <person name="Taketani Y."/>
            <person name="Miyamoto K."/>
            <person name="Chikamori M."/>
            <person name="Tanaka K."/>
            <person name="Yamamoto H."/>
            <person name="Tatsumi S."/>
            <person name="Morita K."/>
            <person name="Takeda E."/>
        </authorList>
    </citation>
    <scope>NUCLEOTIDE SEQUENCE [GENOMIC DNA] OF 1-11</scope>
</reference>
<reference key="9">
    <citation type="journal article" date="1995" name="Biochem. J.">
        <title>Cloning and functional expression of a Na(+)-dependent phosphate co-transporter from human kidney: cDNA cloning and functional expression.</title>
        <authorList>
            <person name="Miyamoto K."/>
            <person name="Tatsumi S."/>
            <person name="Sonoda T."/>
            <person name="Yamamoto H."/>
            <person name="Minami H."/>
            <person name="Taketani Y."/>
            <person name="Takeda E."/>
        </authorList>
    </citation>
    <scope>NUCLEOTIDE SEQUENCE [MRNA] OF 2-467 (ISOFORM 1)</scope>
    <scope>VARIANT ILE-269</scope>
    <scope>FUNCTION</scope>
    <scope>TRANSPORTER ACTIVITY</scope>
    <scope>BIOPHYSICOCHEMICAL PROPERTIES</scope>
    <scope>TISSUE SPECIFICITY</scope>
    <source>
        <tissue>Kidney cortex</tissue>
    </source>
</reference>
<reference key="10">
    <citation type="journal article" date="2015" name="Arthritis Rheum.">
        <title>NPT1/SLC17A1 is a renal urate exporter in humans and its common gain-of-function variant decreases the risk of renal underexcretion gout.</title>
        <authorList>
            <person name="Chiba T."/>
            <person name="Matsuo H."/>
            <person name="Kawamura Y."/>
            <person name="Nagamori S."/>
            <person name="Nishiyama T."/>
            <person name="Wei L."/>
            <person name="Nakayama A."/>
            <person name="Nakamura T."/>
            <person name="Sakiyama M."/>
            <person name="Takada T."/>
            <person name="Taketani Y."/>
            <person name="Suma S."/>
            <person name="Naito M."/>
            <person name="Oda T."/>
            <person name="Kumagai H."/>
            <person name="Moriyama Y."/>
            <person name="Ichida K."/>
            <person name="Shimizu T."/>
            <person name="Kanai Y."/>
            <person name="Shinomiya N."/>
        </authorList>
    </citation>
    <scope>VARIANT ILE-269</scope>
    <scope>CHARACTERIZATION OF VARIANT ILE-269</scope>
    <scope>FUNCTION</scope>
    <scope>TRANSPORTER ACTIVITY</scope>
    <scope>SUBCELLULAR LOCATION</scope>
</reference>
<reference key="11">
    <citation type="journal article" date="2016" name="Nucleosides Nucleotides Nucleic Acids">
        <title>Expression of a human NPT1/SLC17A1 missense variant which increases urate export.</title>
        <authorList>
            <person name="Sakiyama M."/>
            <person name="Matsuo H."/>
            <person name="Nagamori S."/>
            <person name="Ling W."/>
            <person name="Kawamura Y."/>
            <person name="Nakayama A."/>
            <person name="Higashino T."/>
            <person name="Chiba T."/>
            <person name="Ichida K."/>
            <person name="Kanai Y."/>
            <person name="Shinomiya N."/>
        </authorList>
    </citation>
    <scope>VARIANT ILE-269</scope>
    <scope>CHARACTERIZATION OF VARIANT ILE-269</scope>
    <scope>SUBCELLULAR LOCATION</scope>
    <scope>FUNCTION</scope>
    <scope>TRANSPORTER ACTIVITY</scope>
</reference>
<protein>
    <recommendedName>
        <fullName>Sodium-dependent phosphate transport protein 1</fullName>
    </recommendedName>
    <alternativeName>
        <fullName>Na(+)/PI cotransporter 1</fullName>
    </alternativeName>
    <alternativeName>
        <fullName>Na/Pi-4</fullName>
    </alternativeName>
    <alternativeName>
        <fullName>Renal Na(+)-dependent phosphate cotransporter 1</fullName>
    </alternativeName>
    <alternativeName>
        <fullName>Renal sodium-dependent phosphate transport protein 1</fullName>
        <shortName>Renal sodium-phosphate transport protein 1</shortName>
    </alternativeName>
    <alternativeName>
        <fullName>Sodium/phosphate cotransporter 1</fullName>
    </alternativeName>
    <alternativeName>
        <fullName>Solute carrier family 17 member 1</fullName>
    </alternativeName>
</protein>
<sequence length="467" mass="51132">MQMDNRLPPKKVPGFCSFRYGLSFLVHCCNVIITAQRACLNLTMVVMVNSTDPHGLPNTSTKKLLDNIKNPMYNWSPDIQGIILSSTSYGVIIIQVPVGYFSGIYSTKKMIGFALCLSSVLSLLIPPAAGIGVAWVVVCRAVQGAAQGIVATAQFEIYVKWAPPLERGRLTSMSTSGFLLGPFIVLLVTGVICESLGWPMVFYIFGACGCAVCLLWFVLFYDDPKDHPCISISEKEYITSSLVQQVSSSRQSLPIKAILKSLPVWAISTGSFTFFWSHNIMTLYTPMFINSMLHVNIKENGFLSSLPYLFAWICGNLAGQLSDFFLTRNILSVIAVRKLFTAAGFLLPAIFGVCLPYLSSTFYSIVIFLILAGATGSFCLGGVFINGLDIAPRYFGFIKACSTLTGMIGGLIASTLTGLILKQDPESAWFKTFILMAAINVTGLIFYLIVATAEIQDWAKEKQHTRL</sequence>